<comment type="subcellular location">
    <subcellularLocation>
        <location>Cell projection</location>
        <location>Cilium</location>
        <location>Flagellum membrane</location>
        <topology>Lipid-anchor</topology>
        <topology>GPI-anchor</topology>
    </subcellularLocation>
    <text>Attached to the flagellar membrane by a GPI-anchor.</text>
</comment>
<comment type="tissue specificity">
    <text>Sperm.</text>
</comment>
<feature type="signal peptide" evidence="1">
    <location>
        <begin position="1"/>
        <end position="25"/>
    </location>
</feature>
<feature type="chain" id="PRO_0000007735" description="63 kDa sperm flagellar membrane protein">
    <location>
        <begin position="26"/>
        <end position="446"/>
    </location>
</feature>
<feature type="propeptide" id="PRO_0000007736" description="Removed in mature form" evidence="1">
    <location>
        <begin position="447"/>
        <end position="470"/>
    </location>
</feature>
<feature type="domain" description="EGF-like 1" evidence="2">
    <location>
        <begin position="41"/>
        <end position="80"/>
    </location>
</feature>
<feature type="domain" description="SEA" evidence="3">
    <location>
        <begin position="81"/>
        <end position="205"/>
    </location>
</feature>
<feature type="domain" description="EGF-like 2; calcium-binding" evidence="2">
    <location>
        <begin position="202"/>
        <end position="250"/>
    </location>
</feature>
<feature type="domain" description="EGF-like 3" evidence="2">
    <location>
        <begin position="249"/>
        <end position="292"/>
    </location>
</feature>
<feature type="lipid moiety-binding region" description="GPI-anchor amidated glycine" evidence="1">
    <location>
        <position position="446"/>
    </location>
</feature>
<feature type="glycosylation site" description="N-linked (GlcNAc...) asparagine" evidence="1">
    <location>
        <position position="78"/>
    </location>
</feature>
<feature type="glycosylation site" description="N-linked (GlcNAc...) asparagine" evidence="1">
    <location>
        <position position="170"/>
    </location>
</feature>
<feature type="glycosylation site" description="N-linked (GlcNAc...) asparagine" evidence="1">
    <location>
        <position position="219"/>
    </location>
</feature>
<feature type="glycosylation site" description="N-linked (GlcNAc...) asparagine" evidence="1">
    <location>
        <position position="322"/>
    </location>
</feature>
<feature type="disulfide bond" evidence="2">
    <location>
        <begin position="45"/>
        <end position="57"/>
    </location>
</feature>
<feature type="disulfide bond" evidence="2">
    <location>
        <begin position="50"/>
        <end position="66"/>
    </location>
</feature>
<feature type="disulfide bond" evidence="2">
    <location>
        <begin position="68"/>
        <end position="79"/>
    </location>
</feature>
<feature type="disulfide bond" evidence="2">
    <location>
        <begin position="206"/>
        <end position="220"/>
    </location>
</feature>
<feature type="disulfide bond" evidence="2">
    <location>
        <begin position="214"/>
        <end position="229"/>
    </location>
</feature>
<feature type="disulfide bond" evidence="2">
    <location>
        <begin position="231"/>
        <end position="249"/>
    </location>
</feature>
<feature type="disulfide bond" evidence="2">
    <location>
        <begin position="253"/>
        <end position="265"/>
    </location>
</feature>
<feature type="disulfide bond" evidence="2">
    <location>
        <begin position="258"/>
        <end position="277"/>
    </location>
</feature>
<feature type="disulfide bond" evidence="2">
    <location>
        <begin position="279"/>
        <end position="291"/>
    </location>
</feature>
<keyword id="KW-1003">Cell membrane</keyword>
<keyword id="KW-0966">Cell projection</keyword>
<keyword id="KW-0969">Cilium</keyword>
<keyword id="KW-1015">Disulfide bond</keyword>
<keyword id="KW-0245">EGF-like domain</keyword>
<keyword id="KW-0282">Flagellum</keyword>
<keyword id="KW-0325">Glycoprotein</keyword>
<keyword id="KW-0336">GPI-anchor</keyword>
<keyword id="KW-0449">Lipoprotein</keyword>
<keyword id="KW-0472">Membrane</keyword>
<keyword id="KW-1185">Reference proteome</keyword>
<keyword id="KW-0677">Repeat</keyword>
<keyword id="KW-0732">Signal</keyword>
<reference key="1">
    <citation type="journal article" date="1993" name="J. Cell Biol.">
        <title>A GPI-anchored sea urchin sperm membrane protein containing EGF domains is related to human uromodulin.</title>
        <authorList>
            <person name="Mendoza L.M."/>
            <person name="Nishioka D."/>
            <person name="Vacquier V.D."/>
        </authorList>
    </citation>
    <scope>NUCLEOTIDE SEQUENCE [MRNA]</scope>
</reference>
<evidence type="ECO:0000255" key="1"/>
<evidence type="ECO:0000255" key="2">
    <source>
        <dbReference type="PROSITE-ProRule" id="PRU00076"/>
    </source>
</evidence>
<evidence type="ECO:0000255" key="3">
    <source>
        <dbReference type="PROSITE-ProRule" id="PRU00188"/>
    </source>
</evidence>
<organism>
    <name type="scientific">Strongylocentrotus purpuratus</name>
    <name type="common">Purple sea urchin</name>
    <dbReference type="NCBI Taxonomy" id="7668"/>
    <lineage>
        <taxon>Eukaryota</taxon>
        <taxon>Metazoa</taxon>
        <taxon>Echinodermata</taxon>
        <taxon>Eleutherozoa</taxon>
        <taxon>Echinozoa</taxon>
        <taxon>Echinoidea</taxon>
        <taxon>Euechinoidea</taxon>
        <taxon>Echinacea</taxon>
        <taxon>Camarodonta</taxon>
        <taxon>Echinidea</taxon>
        <taxon>Strongylocentrotidae</taxon>
        <taxon>Strongylocentrotus</taxon>
    </lineage>
</organism>
<accession>Q07929</accession>
<accession>P98117</accession>
<proteinExistence type="evidence at transcript level"/>
<protein>
    <recommendedName>
        <fullName>63 kDa sperm flagellar membrane protein</fullName>
    </recommendedName>
</protein>
<sequence>MFCHLHCMLVVFSLLLTLTGSFVNAQTTEVVTEITATTADPPDPCASNPCTIASTHCVAAGESHTCECRPGYFETNGNCTVAQQFAGSFSVTQVGGSNVLYSADLADTDSAAFASLAADVEDALDTVYQASTMADIYLGSEVWGVPEWLYRGRLHVLFATEDAGQPVLVNSTDATEAFTTALAAEAANLGITIDDSTITVSDFDECASADDNDCDPNANCTNTAGSFTCECDTELYDNSPNTEEPGRVCIAPCDPGLCTRPNEICNNGGTIEDDNLCKCIEGYDYTQYGDCDPMARSTDFRCYHCEDSIDNVKCNGRMESENGTARQCPNPTDTCYQTIQMNPEGDGFMIRKGCMNLEDCYDLLYSYEADPAKASCFEYIFPYGQDTPPGPGVQCHYCCSEYFPLDLCNYDSIHFIYGTPRINSWDPRMNWDLSMNLDATEEPESGSQRHLPVCGVLSLVVTTLLALMLH</sequence>
<dbReference type="EMBL" id="M99584">
    <property type="protein sequence ID" value="AAA30029.1"/>
    <property type="molecule type" value="mRNA"/>
</dbReference>
<dbReference type="PIR" id="A40697">
    <property type="entry name" value="A40697"/>
</dbReference>
<dbReference type="RefSeq" id="NP_999632.1">
    <property type="nucleotide sequence ID" value="NM_214467.1"/>
</dbReference>
<dbReference type="STRING" id="7668.Q07929"/>
<dbReference type="EnsemblMetazoa" id="NM_214467">
    <property type="protein sequence ID" value="NP_999632"/>
    <property type="gene ID" value="LOC373185"/>
</dbReference>
<dbReference type="GeneID" id="373185"/>
<dbReference type="KEGG" id="spu:373185"/>
<dbReference type="eggNOG" id="ENOG502RTRX">
    <property type="taxonomic scope" value="Eukaryota"/>
</dbReference>
<dbReference type="HOGENOM" id="CLU_589672_0_0_1"/>
<dbReference type="InParanoid" id="Q07929"/>
<dbReference type="OMA" id="CASADDN"/>
<dbReference type="OrthoDB" id="6149028at2759"/>
<dbReference type="PhylomeDB" id="Q07929"/>
<dbReference type="Proteomes" id="UP000007110">
    <property type="component" value="Unassembled WGS sequence"/>
</dbReference>
<dbReference type="GO" id="GO:0031514">
    <property type="term" value="C:motile cilium"/>
    <property type="evidence" value="ECO:0007669"/>
    <property type="project" value="UniProtKB-KW"/>
</dbReference>
<dbReference type="GO" id="GO:0005886">
    <property type="term" value="C:plasma membrane"/>
    <property type="evidence" value="ECO:0007669"/>
    <property type="project" value="UniProtKB-KW"/>
</dbReference>
<dbReference type="GO" id="GO:0098552">
    <property type="term" value="C:side of membrane"/>
    <property type="evidence" value="ECO:0007669"/>
    <property type="project" value="UniProtKB-KW"/>
</dbReference>
<dbReference type="GO" id="GO:0005509">
    <property type="term" value="F:calcium ion binding"/>
    <property type="evidence" value="ECO:0007669"/>
    <property type="project" value="InterPro"/>
</dbReference>
<dbReference type="CDD" id="cd00054">
    <property type="entry name" value="EGF_CA"/>
    <property type="match status" value="1"/>
</dbReference>
<dbReference type="Gene3D" id="2.10.25.10">
    <property type="entry name" value="Laminin"/>
    <property type="match status" value="2"/>
</dbReference>
<dbReference type="Gene3D" id="3.30.70.960">
    <property type="entry name" value="SEA domain"/>
    <property type="match status" value="1"/>
</dbReference>
<dbReference type="InterPro" id="IPR001881">
    <property type="entry name" value="EGF-like_Ca-bd_dom"/>
</dbReference>
<dbReference type="InterPro" id="IPR000742">
    <property type="entry name" value="EGF-like_dom"/>
</dbReference>
<dbReference type="InterPro" id="IPR000152">
    <property type="entry name" value="EGF-type_Asp/Asn_hydroxyl_site"/>
</dbReference>
<dbReference type="InterPro" id="IPR018097">
    <property type="entry name" value="EGF_Ca-bd_CS"/>
</dbReference>
<dbReference type="InterPro" id="IPR009030">
    <property type="entry name" value="Growth_fac_rcpt_cys_sf"/>
</dbReference>
<dbReference type="InterPro" id="IPR049883">
    <property type="entry name" value="NOTCH1_EGF-like"/>
</dbReference>
<dbReference type="InterPro" id="IPR000082">
    <property type="entry name" value="SEA_dom"/>
</dbReference>
<dbReference type="InterPro" id="IPR036364">
    <property type="entry name" value="SEA_dom_sf"/>
</dbReference>
<dbReference type="PANTHER" id="PTHR24037">
    <property type="entry name" value="HEART DEVELOPMENT PROTEIN WITH EGF-LIKE DOMAINS 1"/>
    <property type="match status" value="1"/>
</dbReference>
<dbReference type="PANTHER" id="PTHR24037:SF11">
    <property type="entry name" value="MUCIN-2-LIKE"/>
    <property type="match status" value="1"/>
</dbReference>
<dbReference type="Pfam" id="PF07645">
    <property type="entry name" value="EGF_CA"/>
    <property type="match status" value="1"/>
</dbReference>
<dbReference type="Pfam" id="PF01390">
    <property type="entry name" value="SEA"/>
    <property type="match status" value="1"/>
</dbReference>
<dbReference type="SMART" id="SM00181">
    <property type="entry name" value="EGF"/>
    <property type="match status" value="3"/>
</dbReference>
<dbReference type="SMART" id="SM00179">
    <property type="entry name" value="EGF_CA"/>
    <property type="match status" value="2"/>
</dbReference>
<dbReference type="SMART" id="SM00200">
    <property type="entry name" value="SEA"/>
    <property type="match status" value="1"/>
</dbReference>
<dbReference type="SUPFAM" id="SSF57184">
    <property type="entry name" value="Growth factor receptor domain"/>
    <property type="match status" value="1"/>
</dbReference>
<dbReference type="SUPFAM" id="SSF82671">
    <property type="entry name" value="SEA domain"/>
    <property type="match status" value="1"/>
</dbReference>
<dbReference type="PROSITE" id="PS00010">
    <property type="entry name" value="ASX_HYDROXYL"/>
    <property type="match status" value="1"/>
</dbReference>
<dbReference type="PROSITE" id="PS01186">
    <property type="entry name" value="EGF_2"/>
    <property type="match status" value="2"/>
</dbReference>
<dbReference type="PROSITE" id="PS50026">
    <property type="entry name" value="EGF_3"/>
    <property type="match status" value="2"/>
</dbReference>
<dbReference type="PROSITE" id="PS01187">
    <property type="entry name" value="EGF_CA"/>
    <property type="match status" value="1"/>
</dbReference>
<dbReference type="PROSITE" id="PS50024">
    <property type="entry name" value="SEA"/>
    <property type="match status" value="1"/>
</dbReference>
<name>SP63_STRPU</name>